<proteinExistence type="inferred from homology"/>
<comment type="function">
    <text evidence="1">NAD-binding protein involved in the addition of a carboxymethylaminomethyl (cmnm) group at the wobble position (U34) of certain tRNAs, forming tRNA-cmnm(5)s(2)U34.</text>
</comment>
<comment type="cofactor">
    <cofactor evidence="1">
        <name>FAD</name>
        <dbReference type="ChEBI" id="CHEBI:57692"/>
    </cofactor>
</comment>
<comment type="subunit">
    <text evidence="1">Homodimer. Heterotetramer of two MnmE and two MnmG subunits.</text>
</comment>
<comment type="subcellular location">
    <subcellularLocation>
        <location evidence="1">Cytoplasm</location>
    </subcellularLocation>
</comment>
<comment type="similarity">
    <text evidence="1">Belongs to the MnmG family.</text>
</comment>
<protein>
    <recommendedName>
        <fullName evidence="1">tRNA uridine 5-carboxymethylaminomethyl modification enzyme MnmG</fullName>
    </recommendedName>
    <alternativeName>
        <fullName evidence="1">Glucose-inhibited division protein A</fullName>
    </alternativeName>
</protein>
<reference key="1">
    <citation type="submission" date="2007-06" db="EMBL/GenBank/DDBJ databases">
        <title>Complete sequence of chromosome of Staphylococcus aureus subsp. aureus JH1.</title>
        <authorList>
            <consortium name="US DOE Joint Genome Institute"/>
            <person name="Copeland A."/>
            <person name="Lucas S."/>
            <person name="Lapidus A."/>
            <person name="Barry K."/>
            <person name="Detter J.C."/>
            <person name="Glavina del Rio T."/>
            <person name="Hammon N."/>
            <person name="Israni S."/>
            <person name="Dalin E."/>
            <person name="Tice H."/>
            <person name="Pitluck S."/>
            <person name="Chain P."/>
            <person name="Malfatti S."/>
            <person name="Shin M."/>
            <person name="Vergez L."/>
            <person name="Schmutz J."/>
            <person name="Larimer F."/>
            <person name="Land M."/>
            <person name="Hauser L."/>
            <person name="Kyrpides N."/>
            <person name="Ivanova N."/>
            <person name="Tomasz A."/>
            <person name="Richardson P."/>
        </authorList>
    </citation>
    <scope>NUCLEOTIDE SEQUENCE [LARGE SCALE GENOMIC DNA]</scope>
    <source>
        <strain>JH1</strain>
    </source>
</reference>
<organism>
    <name type="scientific">Staphylococcus aureus (strain JH1)</name>
    <dbReference type="NCBI Taxonomy" id="359787"/>
    <lineage>
        <taxon>Bacteria</taxon>
        <taxon>Bacillati</taxon>
        <taxon>Bacillota</taxon>
        <taxon>Bacilli</taxon>
        <taxon>Bacillales</taxon>
        <taxon>Staphylococcaceae</taxon>
        <taxon>Staphylococcus</taxon>
    </lineage>
</organism>
<name>MNMG_STAA2</name>
<keyword id="KW-0963">Cytoplasm</keyword>
<keyword id="KW-0274">FAD</keyword>
<keyword id="KW-0285">Flavoprotein</keyword>
<keyword id="KW-0520">NAD</keyword>
<keyword id="KW-0819">tRNA processing</keyword>
<accession>A6U594</accession>
<dbReference type="EMBL" id="CP000736">
    <property type="protein sequence ID" value="ABR53612.1"/>
    <property type="molecule type" value="Genomic_DNA"/>
</dbReference>
<dbReference type="SMR" id="A6U594"/>
<dbReference type="KEGG" id="sah:SaurJH1_2790"/>
<dbReference type="HOGENOM" id="CLU_007831_2_2_9"/>
<dbReference type="GO" id="GO:0005829">
    <property type="term" value="C:cytosol"/>
    <property type="evidence" value="ECO:0007669"/>
    <property type="project" value="TreeGrafter"/>
</dbReference>
<dbReference type="GO" id="GO:0050660">
    <property type="term" value="F:flavin adenine dinucleotide binding"/>
    <property type="evidence" value="ECO:0007669"/>
    <property type="project" value="UniProtKB-UniRule"/>
</dbReference>
<dbReference type="GO" id="GO:0030488">
    <property type="term" value="P:tRNA methylation"/>
    <property type="evidence" value="ECO:0007669"/>
    <property type="project" value="TreeGrafter"/>
</dbReference>
<dbReference type="GO" id="GO:0002098">
    <property type="term" value="P:tRNA wobble uridine modification"/>
    <property type="evidence" value="ECO:0007669"/>
    <property type="project" value="InterPro"/>
</dbReference>
<dbReference type="FunFam" id="1.10.10.1800:FF:000001">
    <property type="entry name" value="tRNA uridine 5-carboxymethylaminomethyl modification enzyme MnmG"/>
    <property type="match status" value="1"/>
</dbReference>
<dbReference type="FunFam" id="1.10.150.570:FF:000001">
    <property type="entry name" value="tRNA uridine 5-carboxymethylaminomethyl modification enzyme MnmG"/>
    <property type="match status" value="1"/>
</dbReference>
<dbReference type="FunFam" id="3.50.50.60:FF:000002">
    <property type="entry name" value="tRNA uridine 5-carboxymethylaminomethyl modification enzyme MnmG"/>
    <property type="match status" value="1"/>
</dbReference>
<dbReference type="FunFam" id="3.50.50.60:FF:000063">
    <property type="entry name" value="tRNA uridine 5-carboxymethylaminomethyl modification enzyme MnmG"/>
    <property type="match status" value="1"/>
</dbReference>
<dbReference type="Gene3D" id="3.50.50.60">
    <property type="entry name" value="FAD/NAD(P)-binding domain"/>
    <property type="match status" value="2"/>
</dbReference>
<dbReference type="Gene3D" id="1.10.150.570">
    <property type="entry name" value="GidA associated domain, C-terminal subdomain"/>
    <property type="match status" value="1"/>
</dbReference>
<dbReference type="Gene3D" id="1.10.10.1800">
    <property type="entry name" value="tRNA uridine 5-carboxymethylaminomethyl modification enzyme MnmG/GidA"/>
    <property type="match status" value="1"/>
</dbReference>
<dbReference type="HAMAP" id="MF_00129">
    <property type="entry name" value="MnmG_GidA"/>
    <property type="match status" value="1"/>
</dbReference>
<dbReference type="InterPro" id="IPR036188">
    <property type="entry name" value="FAD/NAD-bd_sf"/>
</dbReference>
<dbReference type="InterPro" id="IPR049312">
    <property type="entry name" value="GIDA_C_N"/>
</dbReference>
<dbReference type="InterPro" id="IPR004416">
    <property type="entry name" value="MnmG"/>
</dbReference>
<dbReference type="InterPro" id="IPR002218">
    <property type="entry name" value="MnmG-rel"/>
</dbReference>
<dbReference type="InterPro" id="IPR020595">
    <property type="entry name" value="MnmG-rel_CS"/>
</dbReference>
<dbReference type="InterPro" id="IPR026904">
    <property type="entry name" value="MnmG_C"/>
</dbReference>
<dbReference type="InterPro" id="IPR047001">
    <property type="entry name" value="MnmG_C_subdom"/>
</dbReference>
<dbReference type="InterPro" id="IPR044920">
    <property type="entry name" value="MnmG_C_subdom_sf"/>
</dbReference>
<dbReference type="InterPro" id="IPR040131">
    <property type="entry name" value="MnmG_N"/>
</dbReference>
<dbReference type="NCBIfam" id="TIGR00136">
    <property type="entry name" value="mnmG_gidA"/>
    <property type="match status" value="1"/>
</dbReference>
<dbReference type="PANTHER" id="PTHR11806">
    <property type="entry name" value="GLUCOSE INHIBITED DIVISION PROTEIN A"/>
    <property type="match status" value="1"/>
</dbReference>
<dbReference type="PANTHER" id="PTHR11806:SF0">
    <property type="entry name" value="PROTEIN MTO1 HOMOLOG, MITOCHONDRIAL"/>
    <property type="match status" value="1"/>
</dbReference>
<dbReference type="Pfam" id="PF01134">
    <property type="entry name" value="GIDA"/>
    <property type="match status" value="1"/>
</dbReference>
<dbReference type="Pfam" id="PF21680">
    <property type="entry name" value="GIDA_C_1st"/>
    <property type="match status" value="1"/>
</dbReference>
<dbReference type="Pfam" id="PF13932">
    <property type="entry name" value="SAM_GIDA_C"/>
    <property type="match status" value="1"/>
</dbReference>
<dbReference type="PRINTS" id="PR00411">
    <property type="entry name" value="PNDRDTASEI"/>
</dbReference>
<dbReference type="SMART" id="SM01228">
    <property type="entry name" value="GIDA_assoc_3"/>
    <property type="match status" value="1"/>
</dbReference>
<dbReference type="SUPFAM" id="SSF51905">
    <property type="entry name" value="FAD/NAD(P)-binding domain"/>
    <property type="match status" value="1"/>
</dbReference>
<dbReference type="PROSITE" id="PS01280">
    <property type="entry name" value="GIDA_1"/>
    <property type="match status" value="1"/>
</dbReference>
<dbReference type="PROSITE" id="PS01281">
    <property type="entry name" value="GIDA_2"/>
    <property type="match status" value="1"/>
</dbReference>
<feature type="chain" id="PRO_1000076334" description="tRNA uridine 5-carboxymethylaminomethyl modification enzyme MnmG">
    <location>
        <begin position="1"/>
        <end position="625"/>
    </location>
</feature>
<feature type="binding site" evidence="1">
    <location>
        <begin position="11"/>
        <end position="16"/>
    </location>
    <ligand>
        <name>FAD</name>
        <dbReference type="ChEBI" id="CHEBI:57692"/>
    </ligand>
</feature>
<feature type="binding site" evidence="1">
    <location>
        <position position="123"/>
    </location>
    <ligand>
        <name>FAD</name>
        <dbReference type="ChEBI" id="CHEBI:57692"/>
    </ligand>
</feature>
<feature type="binding site" evidence="1">
    <location>
        <position position="178"/>
    </location>
    <ligand>
        <name>FAD</name>
        <dbReference type="ChEBI" id="CHEBI:57692"/>
    </ligand>
</feature>
<feature type="binding site" evidence="1">
    <location>
        <begin position="270"/>
        <end position="284"/>
    </location>
    <ligand>
        <name>NAD(+)</name>
        <dbReference type="ChEBI" id="CHEBI:57540"/>
    </ligand>
</feature>
<feature type="binding site" evidence="1">
    <location>
        <position position="367"/>
    </location>
    <ligand>
        <name>FAD</name>
        <dbReference type="ChEBI" id="CHEBI:57692"/>
    </ligand>
</feature>
<evidence type="ECO:0000255" key="1">
    <source>
        <dbReference type="HAMAP-Rule" id="MF_00129"/>
    </source>
</evidence>
<sequence length="625" mass="70116">MVQEYDVIVIGAGHAGVEAGLASARRGAKTLMLTINLDNIAFMPCNPSVGGPAKGIVVREIDALGGQMAKTIDKTHIQMRMLNTGKGPAVRALRAQADKVLYQQEMKRVIEDEENLHIMQGMVDELIIEDNEVKGVRTNIGTEYLSKAVIITTGTFLRGEIILGNMKYSSGPNHQLPSITLSDNLRELGFDIVRFKTGTPPRVNSKTIDYSKTEIQPGDDVGRAFSFETTEYILDQLPCWLTYTNAETHKVIDDNLHLSAMYSGMIKGTGPRYCPSIEDKFVRFNDKPRHQLFLEPEGRNTNEVYVQGLSTSLPEHVQRQMLETIPGLEKADMMRAGYAIEYDAIVPTQLWPTLETKMIKNLYTAGQINGTSGYEEAAGQGLMAGINAAGKVLNTGEKILSRSDAYIGVLIDDLVTKGTNEPYRLLTSRAEYRLLLRHDNADLRLTDMGYELGMISEERYARFNEKRQQIDAEIKRLSDIRIKPNEHTQAIIEQHGGSRLKDGILAIDLLRRPEMTYDIILEILEEEHQLNADVEEQVEIQTKYEGYINKSLQQVEKVKRMEEKKIPEDLDYSKIDSLATEAREKLSEVKPLNIAQASRISGVNPADISILLIYLEQGKLQRVSD</sequence>
<gene>
    <name evidence="1" type="primary">mnmG</name>
    <name evidence="1" type="synonym">gidA</name>
    <name type="ordered locus">SaurJH1_2790</name>
</gene>